<proteinExistence type="evidence at transcript level"/>
<comment type="function">
    <text evidence="4">E3 ubiquitin-protein ligase required for accumulation of repair proteins to sites of DNA damage. Acts with UBE2N/UBC13 to amplify the RNF8-dependent histone ubiquitination. Recruited to sites of DNA damage at double-strand breaks (DSBs) by binding to ubiquitinated histone H2A and H2AX and amplifies the RNF8-dependent H2A ubiquitination, promoting the formation of 'Lys-63'-linked ubiquitin conjugates. This leads to concentrate ubiquitinated histones H2A and H2AX at DNA lesions to the threshold required for recruitment of TP53BP1 and BRCA1. Also recruited at DNA interstrand cross-links (ICLs) sites and promotes accumulation of 'Lys-63'-linked ubiquitination of histones H2A and H2AX, leading to recruitment of FAAP20 and Fanconi anemia (FA) complex, followed by interstrand cross-link repair. H2A ubiquitination also mediates the ATM-dependent transcriptional silencing at regions flanking DSBs in cis, a mechanism to avoid collision between transcription and repair intermediates. Also involved in class switch recombination in immune system, via its role in regulation of DSBs repair. Following DNA damage, promotes the ubiquitination and degradation of JMJD2A/KDM4A in collaboration with RNF8, leading to unmask H4K20me2 mark and promote the recruitment of TP53BP1 at DNA damage sites. Not able to initiate 'Lys-63'-linked ubiquitination in vitro; possibly due to partial occlusion of the UBE2N/UBC13-binding region. Catalyzes monoubiquitination of 'Lys-13' and 'Lys-15' of nucleosomal histone H2A (H2AK13Ub and H2AK15Ub, respectively).</text>
</comment>
<comment type="catalytic activity">
    <reaction evidence="4">
        <text>S-ubiquitinyl-[E2 ubiquitin-conjugating enzyme]-L-cysteine + [acceptor protein]-L-lysine = [E2 ubiquitin-conjugating enzyme]-L-cysteine + N(6)-ubiquitinyl-[acceptor protein]-L-lysine.</text>
        <dbReference type="EC" id="2.3.2.27"/>
    </reaction>
</comment>
<comment type="pathway">
    <text evidence="4">Protein modification; protein ubiquitination.</text>
</comment>
<comment type="subunit">
    <text evidence="4">Monomer. Interacts with UBE2N/UBC13.</text>
</comment>
<comment type="subcellular location">
    <subcellularLocation>
        <location evidence="4">Nucleus</location>
    </subcellularLocation>
    <text evidence="4">Localizes to double-strand breaks (DSBs) sites of DNA damage.</text>
</comment>
<comment type="alternative products">
    <event type="alternative splicing"/>
    <isoform>
        <id>Q0IIM1-1</id>
        <name>1</name>
        <sequence type="displayed"/>
    </isoform>
    <isoform>
        <id>Q0IIM1-2</id>
        <name>2</name>
        <sequence type="described" ref="VSP_036673 VSP_036674"/>
    </isoform>
</comment>
<comment type="domain">
    <text evidence="4">The MIU motif (motif interacting with ubiquitin) mediates the interaction with both 'Lys-48'- and 'Lys-63'-linked ubiquitin chains. The UMI motif mediates interaction with ubiquitin with a preference for 'Lys-63'-linked ubiquitin. The specificity for different types of ubiquitin is mediated by juxtaposition of ubiquitin-binding motifs (MIU and UMI motifs) with LR motifs (LRMs).</text>
</comment>
<comment type="PTM">
    <text evidence="4">Sumoylated with SUMO1 by PIAS4 in response to double-strand breaks (DSBs).</text>
</comment>
<comment type="PTM">
    <text evidence="4">Ubiquitinated.</text>
</comment>
<comment type="similarity">
    <text evidence="4">Belongs to the RNF168 family.</text>
</comment>
<comment type="caution">
    <text evidence="4">According to a well-established model, RNF168 cannot initiate H2A 'Lys-63'-linked ubiquitination and is recruited following RNF8-dependent histone ubiquitination to amplify H2A 'Lys-63'-linked ubiquitination. However, other data suggest that RNF168 is the priming ubiquitin ligase by mediating monoubiquitination of 'Lys-13' and 'Lys-15' of nucleosomal histone H2A (H2AK13Ub and H2AK15Ub respectively). These data suggest that RNF168 might be recruited to DSBs sites in a RNF8-dependent manner by binding to non-histone proteins ubiquitinated via 'Lys-63'-linked and initiates monoubiquitination of H2A, which is then amplified by RNF8. Additional evidence is however required to confirm these data.</text>
</comment>
<organism>
    <name type="scientific">Bos taurus</name>
    <name type="common">Bovine</name>
    <dbReference type="NCBI Taxonomy" id="9913"/>
    <lineage>
        <taxon>Eukaryota</taxon>
        <taxon>Metazoa</taxon>
        <taxon>Chordata</taxon>
        <taxon>Craniata</taxon>
        <taxon>Vertebrata</taxon>
        <taxon>Euteleostomi</taxon>
        <taxon>Mammalia</taxon>
        <taxon>Eutheria</taxon>
        <taxon>Laurasiatheria</taxon>
        <taxon>Artiodactyla</taxon>
        <taxon>Ruminantia</taxon>
        <taxon>Pecora</taxon>
        <taxon>Bovidae</taxon>
        <taxon>Bovinae</taxon>
        <taxon>Bos</taxon>
    </lineage>
</organism>
<evidence type="ECO:0000250" key="1">
    <source>
        <dbReference type="UniProtKB" id="B2RYR0"/>
    </source>
</evidence>
<evidence type="ECO:0000250" key="2">
    <source>
        <dbReference type="UniProtKB" id="Q80XJ2"/>
    </source>
</evidence>
<evidence type="ECO:0000250" key="3">
    <source>
        <dbReference type="UniProtKB" id="Q8IYW5"/>
    </source>
</evidence>
<evidence type="ECO:0000255" key="4">
    <source>
        <dbReference type="HAMAP-Rule" id="MF_03066"/>
    </source>
</evidence>
<evidence type="ECO:0000256" key="5">
    <source>
        <dbReference type="SAM" id="MobiDB-lite"/>
    </source>
</evidence>
<evidence type="ECO:0000303" key="6">
    <source ref="2"/>
</evidence>
<protein>
    <recommendedName>
        <fullName evidence="4">E3 ubiquitin-protein ligase RNF168</fullName>
        <ecNumber evidence="4">2.3.2.27</ecNumber>
    </recommendedName>
    <alternativeName>
        <fullName evidence="4">RING finger protein 168</fullName>
    </alternativeName>
    <alternativeName>
        <fullName>RING-type E3 ubiquitin transferase RNF168</fullName>
    </alternativeName>
</protein>
<accession>Q0IIM1</accession>
<dbReference type="EC" id="2.3.2.27" evidence="4"/>
<dbReference type="EMBL" id="AAFC03087522">
    <property type="status" value="NOT_ANNOTATED_CDS"/>
    <property type="molecule type" value="Genomic_DNA"/>
</dbReference>
<dbReference type="EMBL" id="AAFC03087524">
    <property type="status" value="NOT_ANNOTATED_CDS"/>
    <property type="molecule type" value="Genomic_DNA"/>
</dbReference>
<dbReference type="EMBL" id="BC122577">
    <property type="protein sequence ID" value="AAI22578.1"/>
    <property type="molecule type" value="mRNA"/>
</dbReference>
<dbReference type="RefSeq" id="NP_001069757.2">
    <property type="nucleotide sequence ID" value="NM_001076289.2"/>
</dbReference>
<dbReference type="SMR" id="Q0IIM1"/>
<dbReference type="FunCoup" id="Q0IIM1">
    <property type="interactions" value="3395"/>
</dbReference>
<dbReference type="STRING" id="9913.ENSBTAP00000017712"/>
<dbReference type="PaxDb" id="9913-ENSBTAP00000017712"/>
<dbReference type="Ensembl" id="ENSBTAT00000074288.1">
    <molecule id="Q0IIM1-2"/>
    <property type="protein sequence ID" value="ENSBTAP00000067959.1"/>
    <property type="gene ID" value="ENSBTAG00000013317.6"/>
</dbReference>
<dbReference type="GeneID" id="613812"/>
<dbReference type="KEGG" id="bta:613812"/>
<dbReference type="CTD" id="165918"/>
<dbReference type="VEuPathDB" id="HostDB:ENSBTAG00000013317"/>
<dbReference type="eggNOG" id="KOG4159">
    <property type="taxonomic scope" value="Eukaryota"/>
</dbReference>
<dbReference type="GeneTree" id="ENSGT00940000153680"/>
<dbReference type="InParanoid" id="Q0IIM1"/>
<dbReference type="OrthoDB" id="426657at2759"/>
<dbReference type="Reactome" id="R-BTA-3108214">
    <property type="pathway name" value="SUMOylation of DNA damage response and repair proteins"/>
</dbReference>
<dbReference type="Reactome" id="R-BTA-5693565">
    <property type="pathway name" value="Recruitment and ATM-mediated phosphorylation of repair and signaling proteins at DNA double strand breaks"/>
</dbReference>
<dbReference type="Reactome" id="R-BTA-5693571">
    <property type="pathway name" value="Nonhomologous End-Joining (NHEJ)"/>
</dbReference>
<dbReference type="Reactome" id="R-BTA-5693607">
    <property type="pathway name" value="Processing of DNA double-strand break ends"/>
</dbReference>
<dbReference type="Reactome" id="R-BTA-69473">
    <property type="pathway name" value="G2/M DNA damage checkpoint"/>
</dbReference>
<dbReference type="UniPathway" id="UPA00143"/>
<dbReference type="Proteomes" id="UP000009136">
    <property type="component" value="Chromosome 1"/>
</dbReference>
<dbReference type="Bgee" id="ENSBTAG00000013317">
    <property type="expression patterns" value="Expressed in semen and 107 other cell types or tissues"/>
</dbReference>
<dbReference type="GO" id="GO:0005634">
    <property type="term" value="C:nucleus"/>
    <property type="evidence" value="ECO:0000250"/>
    <property type="project" value="UniProtKB"/>
</dbReference>
<dbReference type="GO" id="GO:0035861">
    <property type="term" value="C:site of double-strand break"/>
    <property type="evidence" value="ECO:0000250"/>
    <property type="project" value="UniProtKB"/>
</dbReference>
<dbReference type="GO" id="GO:0000151">
    <property type="term" value="C:ubiquitin ligase complex"/>
    <property type="evidence" value="ECO:0000250"/>
    <property type="project" value="UniProtKB"/>
</dbReference>
<dbReference type="GO" id="GO:0003682">
    <property type="term" value="F:chromatin binding"/>
    <property type="evidence" value="ECO:0000250"/>
    <property type="project" value="UniProtKB"/>
</dbReference>
<dbReference type="GO" id="GO:0042393">
    <property type="term" value="F:histone binding"/>
    <property type="evidence" value="ECO:0000250"/>
    <property type="project" value="UniProtKB"/>
</dbReference>
<dbReference type="GO" id="GO:0070530">
    <property type="term" value="F:K63-linked polyubiquitin modification-dependent protein binding"/>
    <property type="evidence" value="ECO:0000250"/>
    <property type="project" value="UniProtKB"/>
</dbReference>
<dbReference type="GO" id="GO:0031491">
    <property type="term" value="F:nucleosome binding"/>
    <property type="evidence" value="ECO:0000318"/>
    <property type="project" value="GO_Central"/>
</dbReference>
<dbReference type="GO" id="GO:0043130">
    <property type="term" value="F:ubiquitin binding"/>
    <property type="evidence" value="ECO:0000250"/>
    <property type="project" value="UniProtKB"/>
</dbReference>
<dbReference type="GO" id="GO:0004842">
    <property type="term" value="F:ubiquitin-protein transferase activity"/>
    <property type="evidence" value="ECO:0000250"/>
    <property type="project" value="UniProtKB"/>
</dbReference>
<dbReference type="GO" id="GO:0008270">
    <property type="term" value="F:zinc ion binding"/>
    <property type="evidence" value="ECO:0007669"/>
    <property type="project" value="UniProtKB-KW"/>
</dbReference>
<dbReference type="GO" id="GO:0006974">
    <property type="term" value="P:DNA damage response"/>
    <property type="evidence" value="ECO:0000250"/>
    <property type="project" value="UniProtKB"/>
</dbReference>
<dbReference type="GO" id="GO:0140861">
    <property type="term" value="P:DNA repair-dependent chromatin remodeling"/>
    <property type="evidence" value="ECO:0000250"/>
    <property type="project" value="UniProtKB"/>
</dbReference>
<dbReference type="GO" id="GO:0006302">
    <property type="term" value="P:double-strand break repair"/>
    <property type="evidence" value="ECO:0000250"/>
    <property type="project" value="UniProtKB"/>
</dbReference>
<dbReference type="GO" id="GO:0045190">
    <property type="term" value="P:isotype switching"/>
    <property type="evidence" value="ECO:0000250"/>
    <property type="project" value="UniProtKB"/>
</dbReference>
<dbReference type="GO" id="GO:0034244">
    <property type="term" value="P:negative regulation of transcription elongation by RNA polymerase II"/>
    <property type="evidence" value="ECO:0000250"/>
    <property type="project" value="UniProtKB"/>
</dbReference>
<dbReference type="GO" id="GO:0045739">
    <property type="term" value="P:positive regulation of DNA repair"/>
    <property type="evidence" value="ECO:0000250"/>
    <property type="project" value="UniProtKB"/>
</dbReference>
<dbReference type="GO" id="GO:0070534">
    <property type="term" value="P:protein K63-linked ubiquitination"/>
    <property type="evidence" value="ECO:0000250"/>
    <property type="project" value="UniProtKB"/>
</dbReference>
<dbReference type="GO" id="GO:0016567">
    <property type="term" value="P:protein ubiquitination"/>
    <property type="evidence" value="ECO:0000250"/>
    <property type="project" value="UniProtKB"/>
</dbReference>
<dbReference type="GO" id="GO:0010212">
    <property type="term" value="P:response to ionizing radiation"/>
    <property type="evidence" value="ECO:0000250"/>
    <property type="project" value="UniProtKB"/>
</dbReference>
<dbReference type="GO" id="GO:0006511">
    <property type="term" value="P:ubiquitin-dependent protein catabolic process"/>
    <property type="evidence" value="ECO:0000250"/>
    <property type="project" value="UniProtKB"/>
</dbReference>
<dbReference type="CDD" id="cd21952">
    <property type="entry name" value="MIU2_RNF168"/>
    <property type="match status" value="1"/>
</dbReference>
<dbReference type="CDD" id="cd16550">
    <property type="entry name" value="RING-HC_RNF168"/>
    <property type="match status" value="1"/>
</dbReference>
<dbReference type="CDD" id="cd22265">
    <property type="entry name" value="UDM1_RNF168"/>
    <property type="match status" value="1"/>
</dbReference>
<dbReference type="FunFam" id="3.30.40.10:FF:000466">
    <property type="entry name" value="E3 ubiquitin-protein ligase RNF168"/>
    <property type="match status" value="1"/>
</dbReference>
<dbReference type="Gene3D" id="3.30.40.10">
    <property type="entry name" value="Zinc/RING finger domain, C3HC4 (zinc finger)"/>
    <property type="match status" value="1"/>
</dbReference>
<dbReference type="HAMAP" id="MF_03066">
    <property type="entry name" value="RNF168"/>
    <property type="match status" value="1"/>
</dbReference>
<dbReference type="InterPro" id="IPR034725">
    <property type="entry name" value="RNF168"/>
</dbReference>
<dbReference type="InterPro" id="IPR051657">
    <property type="entry name" value="RNF168/RNF169_E3_ubiq-ligase"/>
</dbReference>
<dbReference type="InterPro" id="IPR018957">
    <property type="entry name" value="Znf_C3HC4_RING-type"/>
</dbReference>
<dbReference type="InterPro" id="IPR001841">
    <property type="entry name" value="Znf_RING"/>
</dbReference>
<dbReference type="InterPro" id="IPR013083">
    <property type="entry name" value="Znf_RING/FYVE/PHD"/>
</dbReference>
<dbReference type="PANTHER" id="PTHR23328:SF1">
    <property type="entry name" value="E3 UBIQUITIN-PROTEIN LIGASE RNF168"/>
    <property type="match status" value="1"/>
</dbReference>
<dbReference type="PANTHER" id="PTHR23328">
    <property type="entry name" value="RING-TYPE DOMAIN-CONTAINING PROTEIN"/>
    <property type="match status" value="1"/>
</dbReference>
<dbReference type="Pfam" id="PF00097">
    <property type="entry name" value="zf-C3HC4"/>
    <property type="match status" value="1"/>
</dbReference>
<dbReference type="SMART" id="SM00184">
    <property type="entry name" value="RING"/>
    <property type="match status" value="1"/>
</dbReference>
<dbReference type="SUPFAM" id="SSF57850">
    <property type="entry name" value="RING/U-box"/>
    <property type="match status" value="1"/>
</dbReference>
<dbReference type="PROSITE" id="PS50089">
    <property type="entry name" value="ZF_RING_2"/>
    <property type="match status" value="1"/>
</dbReference>
<sequence>MAVPKESIPSLLECQCQICVEILFEPVTLPCNHTLCKPCFESTVEKASLCCPFCRRRVSSWARYRSRTNSLVNMELWEIIQKHYPKECKLRASGQESKEIVDDYQPVRLLSKPGELRREYEEEISKVEAERRACEEEENKASEEYIQKLLAEEEEEEKRQAEKRHREMEEQLKSDEELARRLSLDINNFCEGSVLASPLNSRKSDPVTTKSQKKSKNKQTNTGDIQKYLSPKSQLGSASQSEVVQEDRKSSMSKKIDDNSDVKSPTWQDTEVEEDMPTLSPQIYLEVQEQGAKSSVESPMPQLYTSDGEWYLEGKVETGPSNHEKGLCVINLEEPKARVPYSGDAATEPCGETESECTVSYMTQFLRNNTVGTENEESHLQISKGTSKRRNLEPLSEAIREPCFSAKRRKMFPKASSDQEETEISLTQKLIDLEHLLFERHKQEKQDRLLALQLQEEVDQEQMRPDRQKGSPDGYQLRTVSSPPDKVLNGQRKNSRDRNSKRQTELEQPKPRTDSKNENHQQPSFKIQLKCSVNRRKIANSTNDNCNVSKTAHSLQPSKSQKSIFQMFQRVTK</sequence>
<name>RN168_BOVIN</name>
<feature type="chain" id="PRO_0000367281" description="E3 ubiquitin-protein ligase RNF168">
    <location>
        <begin position="1"/>
        <end position="573"/>
    </location>
</feature>
<feature type="zinc finger region" description="RING-type" evidence="4">
    <location>
        <begin position="16"/>
        <end position="55"/>
    </location>
</feature>
<feature type="region of interest" description="Disordered" evidence="5">
    <location>
        <begin position="153"/>
        <end position="174"/>
    </location>
</feature>
<feature type="region of interest" description="Disordered" evidence="5">
    <location>
        <begin position="196"/>
        <end position="277"/>
    </location>
</feature>
<feature type="region of interest" description="Disordered" evidence="5">
    <location>
        <begin position="456"/>
        <end position="528"/>
    </location>
</feature>
<feature type="region of interest" description="Disordered" evidence="5">
    <location>
        <begin position="540"/>
        <end position="573"/>
    </location>
</feature>
<feature type="short sequence motif" description="LR motif 1" evidence="4">
    <location>
        <begin position="110"/>
        <end position="128"/>
    </location>
</feature>
<feature type="short sequence motif" description="UMI motif" evidence="4">
    <location>
        <begin position="143"/>
        <end position="151"/>
    </location>
</feature>
<feature type="short sequence motif" description="MIU motif 1" evidence="4">
    <location>
        <begin position="168"/>
        <end position="191"/>
    </location>
</feature>
<feature type="short sequence motif" description="MIU motif 2" evidence="4">
    <location>
        <begin position="440"/>
        <end position="463"/>
    </location>
</feature>
<feature type="short sequence motif" description="LR motif 2" evidence="4">
    <location>
        <begin position="467"/>
        <end position="478"/>
    </location>
</feature>
<feature type="compositionally biased region" description="Basic and acidic residues" evidence="5">
    <location>
        <begin position="157"/>
        <end position="174"/>
    </location>
</feature>
<feature type="compositionally biased region" description="Polar residues" evidence="5">
    <location>
        <begin position="231"/>
        <end position="243"/>
    </location>
</feature>
<feature type="compositionally biased region" description="Basic and acidic residues" evidence="5">
    <location>
        <begin position="245"/>
        <end position="261"/>
    </location>
</feature>
<feature type="compositionally biased region" description="Basic and acidic residues" evidence="5">
    <location>
        <begin position="461"/>
        <end position="470"/>
    </location>
</feature>
<feature type="compositionally biased region" description="Basic and acidic residues" evidence="5">
    <location>
        <begin position="494"/>
        <end position="519"/>
    </location>
</feature>
<feature type="modified residue" description="Phosphoserine" evidence="2">
    <location>
        <position position="70"/>
    </location>
</feature>
<feature type="modified residue" description="Phosphoserine" evidence="1">
    <location>
        <position position="197"/>
    </location>
</feature>
<feature type="modified residue" description="Phosphothreonine" evidence="1">
    <location>
        <position position="363"/>
    </location>
</feature>
<feature type="modified residue" description="Phosphoserine" evidence="3">
    <location>
        <position position="416"/>
    </location>
</feature>
<feature type="modified residue" description="Phosphoserine" evidence="3">
    <location>
        <position position="471"/>
    </location>
</feature>
<feature type="cross-link" description="Glycyl lysine isopeptide (Lys-Gly) (interchain with G-Cter in SUMO2)" evidence="3">
    <location>
        <position position="210"/>
    </location>
</feature>
<feature type="cross-link" description="Glycyl lysine isopeptide (Lys-Gly) (interchain with G-Cter in SUMO2)" evidence="3">
    <location>
        <position position="530"/>
    </location>
</feature>
<feature type="splice variant" id="VSP_036673" description="In isoform 2." evidence="6">
    <original>NNFC</original>
    <variation>VFVT</variation>
    <location>
        <begin position="187"/>
        <end position="190"/>
    </location>
</feature>
<feature type="splice variant" id="VSP_036674" description="In isoform 2." evidence="6">
    <location>
        <begin position="191"/>
        <end position="573"/>
    </location>
</feature>
<reference key="1">
    <citation type="journal article" date="2009" name="Science">
        <title>The genome sequence of taurine cattle: a window to ruminant biology and evolution.</title>
        <authorList>
            <consortium name="The bovine genome sequencing and analysis consortium"/>
        </authorList>
    </citation>
    <scope>NUCLEOTIDE SEQUENCE [LARGE SCALE GENOMIC DNA]</scope>
    <source>
        <strain>Hereford</strain>
    </source>
</reference>
<reference key="2">
    <citation type="submission" date="2006-08" db="EMBL/GenBank/DDBJ databases">
        <authorList>
            <consortium name="NIH - Mammalian Gene Collection (MGC) project"/>
        </authorList>
    </citation>
    <scope>NUCLEOTIDE SEQUENCE [LARGE SCALE MRNA] (ISOFORM 2)</scope>
    <source>
        <strain>Hereford</strain>
        <tissue>Thalamus</tissue>
    </source>
</reference>
<gene>
    <name evidence="4" type="primary">RNF168</name>
</gene>
<keyword id="KW-0025">Alternative splicing</keyword>
<keyword id="KW-0156">Chromatin regulator</keyword>
<keyword id="KW-0227">DNA damage</keyword>
<keyword id="KW-0234">DNA repair</keyword>
<keyword id="KW-1017">Isopeptide bond</keyword>
<keyword id="KW-0479">Metal-binding</keyword>
<keyword id="KW-0539">Nucleus</keyword>
<keyword id="KW-0597">Phosphoprotein</keyword>
<keyword id="KW-1185">Reference proteome</keyword>
<keyword id="KW-0808">Transferase</keyword>
<keyword id="KW-0832">Ubl conjugation</keyword>
<keyword id="KW-0833">Ubl conjugation pathway</keyword>
<keyword id="KW-0862">Zinc</keyword>
<keyword id="KW-0863">Zinc-finger</keyword>